<proteinExistence type="inferred from homology"/>
<gene>
    <name evidence="1" type="primary">purQ</name>
    <name type="ordered locus">SAR11_1140</name>
</gene>
<reference key="1">
    <citation type="journal article" date="2005" name="Science">
        <title>Genome streamlining in a cosmopolitan oceanic bacterium.</title>
        <authorList>
            <person name="Giovannoni S.J."/>
            <person name="Tripp H.J."/>
            <person name="Givan S."/>
            <person name="Podar M."/>
            <person name="Vergin K.L."/>
            <person name="Baptista D."/>
            <person name="Bibbs L."/>
            <person name="Eads J."/>
            <person name="Richardson T.H."/>
            <person name="Noordewier M."/>
            <person name="Rappe M.S."/>
            <person name="Short J.M."/>
            <person name="Carrington J.C."/>
            <person name="Mathur E.J."/>
        </authorList>
    </citation>
    <scope>NUCLEOTIDE SEQUENCE [LARGE SCALE GENOMIC DNA]</scope>
    <source>
        <strain>HTCC1062</strain>
    </source>
</reference>
<comment type="function">
    <text evidence="1">Part of the phosphoribosylformylglycinamidine synthase complex involved in the purines biosynthetic pathway. Catalyzes the ATP-dependent conversion of formylglycinamide ribonucleotide (FGAR) and glutamine to yield formylglycinamidine ribonucleotide (FGAM) and glutamate. The FGAM synthase complex is composed of three subunits. PurQ produces an ammonia molecule by converting glutamine to glutamate. PurL transfers the ammonia molecule to FGAR to form FGAM in an ATP-dependent manner. PurS interacts with PurQ and PurL and is thought to assist in the transfer of the ammonia molecule from PurQ to PurL.</text>
</comment>
<comment type="catalytic activity">
    <reaction evidence="1">
        <text>N(2)-formyl-N(1)-(5-phospho-beta-D-ribosyl)glycinamide + L-glutamine + ATP + H2O = 2-formamido-N(1)-(5-O-phospho-beta-D-ribosyl)acetamidine + L-glutamate + ADP + phosphate + H(+)</text>
        <dbReference type="Rhea" id="RHEA:17129"/>
        <dbReference type="ChEBI" id="CHEBI:15377"/>
        <dbReference type="ChEBI" id="CHEBI:15378"/>
        <dbReference type="ChEBI" id="CHEBI:29985"/>
        <dbReference type="ChEBI" id="CHEBI:30616"/>
        <dbReference type="ChEBI" id="CHEBI:43474"/>
        <dbReference type="ChEBI" id="CHEBI:58359"/>
        <dbReference type="ChEBI" id="CHEBI:147286"/>
        <dbReference type="ChEBI" id="CHEBI:147287"/>
        <dbReference type="ChEBI" id="CHEBI:456216"/>
        <dbReference type="EC" id="6.3.5.3"/>
    </reaction>
</comment>
<comment type="catalytic activity">
    <reaction evidence="1">
        <text>L-glutamine + H2O = L-glutamate + NH4(+)</text>
        <dbReference type="Rhea" id="RHEA:15889"/>
        <dbReference type="ChEBI" id="CHEBI:15377"/>
        <dbReference type="ChEBI" id="CHEBI:28938"/>
        <dbReference type="ChEBI" id="CHEBI:29985"/>
        <dbReference type="ChEBI" id="CHEBI:58359"/>
        <dbReference type="EC" id="3.5.1.2"/>
    </reaction>
</comment>
<comment type="pathway">
    <text evidence="1">Purine metabolism; IMP biosynthesis via de novo pathway; 5-amino-1-(5-phospho-D-ribosyl)imidazole from N(2)-formyl-N(1)-(5-phospho-D-ribosyl)glycinamide: step 1/2.</text>
</comment>
<comment type="subunit">
    <text evidence="1">Part of the FGAM synthase complex composed of 1 PurL, 1 PurQ and 2 PurS subunits.</text>
</comment>
<comment type="subcellular location">
    <subcellularLocation>
        <location evidence="1">Cytoplasm</location>
    </subcellularLocation>
</comment>
<name>PURQ_PELUB</name>
<dbReference type="EC" id="6.3.5.3" evidence="1"/>
<dbReference type="EC" id="3.5.1.2" evidence="1"/>
<dbReference type="EMBL" id="CP000084">
    <property type="protein sequence ID" value="AAZ21943.1"/>
    <property type="molecule type" value="Genomic_DNA"/>
</dbReference>
<dbReference type="RefSeq" id="WP_006996788.1">
    <property type="nucleotide sequence ID" value="NC_007205.1"/>
</dbReference>
<dbReference type="SMR" id="Q4FLJ5"/>
<dbReference type="STRING" id="335992.SAR11_1140"/>
<dbReference type="GeneID" id="66295634"/>
<dbReference type="KEGG" id="pub:SAR11_1140"/>
<dbReference type="eggNOG" id="COG0047">
    <property type="taxonomic scope" value="Bacteria"/>
</dbReference>
<dbReference type="HOGENOM" id="CLU_001031_3_1_5"/>
<dbReference type="OrthoDB" id="9804441at2"/>
<dbReference type="UniPathway" id="UPA00074">
    <property type="reaction ID" value="UER00128"/>
</dbReference>
<dbReference type="Proteomes" id="UP000002528">
    <property type="component" value="Chromosome"/>
</dbReference>
<dbReference type="GO" id="GO:0005737">
    <property type="term" value="C:cytoplasm"/>
    <property type="evidence" value="ECO:0007669"/>
    <property type="project" value="UniProtKB-SubCell"/>
</dbReference>
<dbReference type="GO" id="GO:0005524">
    <property type="term" value="F:ATP binding"/>
    <property type="evidence" value="ECO:0007669"/>
    <property type="project" value="UniProtKB-KW"/>
</dbReference>
<dbReference type="GO" id="GO:0004359">
    <property type="term" value="F:glutaminase activity"/>
    <property type="evidence" value="ECO:0007669"/>
    <property type="project" value="UniProtKB-EC"/>
</dbReference>
<dbReference type="GO" id="GO:0004642">
    <property type="term" value="F:phosphoribosylformylglycinamidine synthase activity"/>
    <property type="evidence" value="ECO:0007669"/>
    <property type="project" value="UniProtKB-UniRule"/>
</dbReference>
<dbReference type="GO" id="GO:0006189">
    <property type="term" value="P:'de novo' IMP biosynthetic process"/>
    <property type="evidence" value="ECO:0007669"/>
    <property type="project" value="UniProtKB-UniRule"/>
</dbReference>
<dbReference type="CDD" id="cd01740">
    <property type="entry name" value="GATase1_FGAR_AT"/>
    <property type="match status" value="1"/>
</dbReference>
<dbReference type="Gene3D" id="3.40.50.880">
    <property type="match status" value="1"/>
</dbReference>
<dbReference type="HAMAP" id="MF_00421">
    <property type="entry name" value="PurQ"/>
    <property type="match status" value="1"/>
</dbReference>
<dbReference type="InterPro" id="IPR029062">
    <property type="entry name" value="Class_I_gatase-like"/>
</dbReference>
<dbReference type="InterPro" id="IPR010075">
    <property type="entry name" value="PRibForGlyAmidine_synth_PurQ"/>
</dbReference>
<dbReference type="NCBIfam" id="TIGR01737">
    <property type="entry name" value="FGAM_synth_I"/>
    <property type="match status" value="1"/>
</dbReference>
<dbReference type="NCBIfam" id="NF002957">
    <property type="entry name" value="PRK03619.1"/>
    <property type="match status" value="1"/>
</dbReference>
<dbReference type="PANTHER" id="PTHR47552">
    <property type="entry name" value="PHOSPHORIBOSYLFORMYLGLYCINAMIDINE SYNTHASE SUBUNIT PURQ"/>
    <property type="match status" value="1"/>
</dbReference>
<dbReference type="PANTHER" id="PTHR47552:SF1">
    <property type="entry name" value="PHOSPHORIBOSYLFORMYLGLYCINAMIDINE SYNTHASE SUBUNIT PURQ"/>
    <property type="match status" value="1"/>
</dbReference>
<dbReference type="Pfam" id="PF13507">
    <property type="entry name" value="GATase_5"/>
    <property type="match status" value="1"/>
</dbReference>
<dbReference type="PIRSF" id="PIRSF001586">
    <property type="entry name" value="FGAM_synth_I"/>
    <property type="match status" value="1"/>
</dbReference>
<dbReference type="SMART" id="SM01211">
    <property type="entry name" value="GATase_5"/>
    <property type="match status" value="1"/>
</dbReference>
<dbReference type="SUPFAM" id="SSF52317">
    <property type="entry name" value="Class I glutamine amidotransferase-like"/>
    <property type="match status" value="1"/>
</dbReference>
<dbReference type="PROSITE" id="PS51273">
    <property type="entry name" value="GATASE_TYPE_1"/>
    <property type="match status" value="1"/>
</dbReference>
<sequence>MHSSVITFPGSNCDRDMDVALKKFGFKNKMVWHDDVELPKSDLVVLPGGFSYGDYLRCGSMASKSKIMKSVLNFAQGGGKVMGVCNGFQILVESGLLPGVLLRNKYLEFICKNVFVKANNKDNSYFKDDKKNIYEFHIAHNEGNYFCSNDQIKEINDNNQIALFYSDENGNVNEQSNPNGSLQNIAGVFNKQKNVLGMMPHPERMIDPALSGEDGSIFFQNLINNLK</sequence>
<feature type="chain" id="PRO_0000252716" description="Phosphoribosylformylglycinamidine synthase subunit PurQ">
    <location>
        <begin position="1"/>
        <end position="227"/>
    </location>
</feature>
<feature type="domain" description="Glutamine amidotransferase type-1" evidence="1">
    <location>
        <begin position="3"/>
        <end position="227"/>
    </location>
</feature>
<feature type="active site" description="Nucleophile" evidence="1">
    <location>
        <position position="85"/>
    </location>
</feature>
<feature type="active site" evidence="1">
    <location>
        <position position="201"/>
    </location>
</feature>
<feature type="active site" evidence="1">
    <location>
        <position position="203"/>
    </location>
</feature>
<accession>Q4FLJ5</accession>
<evidence type="ECO:0000255" key="1">
    <source>
        <dbReference type="HAMAP-Rule" id="MF_00421"/>
    </source>
</evidence>
<organism>
    <name type="scientific">Pelagibacter ubique (strain HTCC1062)</name>
    <dbReference type="NCBI Taxonomy" id="335992"/>
    <lineage>
        <taxon>Bacteria</taxon>
        <taxon>Pseudomonadati</taxon>
        <taxon>Pseudomonadota</taxon>
        <taxon>Alphaproteobacteria</taxon>
        <taxon>Candidatus Pelagibacterales</taxon>
        <taxon>Candidatus Pelagibacteraceae</taxon>
        <taxon>Candidatus Pelagibacter</taxon>
    </lineage>
</organism>
<protein>
    <recommendedName>
        <fullName evidence="1">Phosphoribosylformylglycinamidine synthase subunit PurQ</fullName>
        <shortName evidence="1">FGAM synthase</shortName>
        <ecNumber evidence="1">6.3.5.3</ecNumber>
    </recommendedName>
    <alternativeName>
        <fullName evidence="1">Formylglycinamide ribonucleotide amidotransferase subunit I</fullName>
        <shortName evidence="1">FGAR amidotransferase I</shortName>
        <shortName evidence="1">FGAR-AT I</shortName>
    </alternativeName>
    <alternativeName>
        <fullName evidence="1">Glutaminase PurQ</fullName>
        <ecNumber evidence="1">3.5.1.2</ecNumber>
    </alternativeName>
    <alternativeName>
        <fullName evidence="1">Phosphoribosylformylglycinamidine synthase subunit I</fullName>
    </alternativeName>
</protein>
<keyword id="KW-0067">ATP-binding</keyword>
<keyword id="KW-0963">Cytoplasm</keyword>
<keyword id="KW-0315">Glutamine amidotransferase</keyword>
<keyword id="KW-0378">Hydrolase</keyword>
<keyword id="KW-0436">Ligase</keyword>
<keyword id="KW-0547">Nucleotide-binding</keyword>
<keyword id="KW-0658">Purine biosynthesis</keyword>
<keyword id="KW-1185">Reference proteome</keyword>